<comment type="function">
    <text evidence="1">Associates with the EF-Tu.GDP complex and induces the exchange of GDP to GTP. It remains bound to the aminoacyl-tRNA.EF-Tu.GTP complex up to the GTP hydrolysis stage on the ribosome.</text>
</comment>
<comment type="subcellular location">
    <subcellularLocation>
        <location evidence="1">Cytoplasm</location>
    </subcellularLocation>
</comment>
<comment type="similarity">
    <text evidence="1">Belongs to the EF-Ts family.</text>
</comment>
<proteinExistence type="inferred from homology"/>
<name>EFTS_ACIBY</name>
<keyword id="KW-0963">Cytoplasm</keyword>
<keyword id="KW-0251">Elongation factor</keyword>
<keyword id="KW-0648">Protein biosynthesis</keyword>
<evidence type="ECO:0000255" key="1">
    <source>
        <dbReference type="HAMAP-Rule" id="MF_00050"/>
    </source>
</evidence>
<sequence>MTAITASMVKELRDRTGLAMMECKKALTEANGDIELAIDNLRKSGQAKAAKKAGNIAADGAITIVQDGNKAILVEVNCQTDFVAKDENFSNFAHTVAAAALAAGETDAAKIAELKLADGQSVEEARIALVQKIGENIQVRRAKIVEGEQLAIYKHGLKIGVVVSYTGDADTGKGIAMHVAAFNPVAVNAEAVPADLIAKEKEIAEAKALESGKPANIVEKMVTGSVEKYLNEVALDRQMYVIDNEKKVADVLKATGTNVANFVRFEVGEGIEKKAELSFAEEVAAAQAAAK</sequence>
<organism>
    <name type="scientific">Acinetobacter baumannii (strain AYE)</name>
    <dbReference type="NCBI Taxonomy" id="509173"/>
    <lineage>
        <taxon>Bacteria</taxon>
        <taxon>Pseudomonadati</taxon>
        <taxon>Pseudomonadota</taxon>
        <taxon>Gammaproteobacteria</taxon>
        <taxon>Moraxellales</taxon>
        <taxon>Moraxellaceae</taxon>
        <taxon>Acinetobacter</taxon>
        <taxon>Acinetobacter calcoaceticus/baumannii complex</taxon>
    </lineage>
</organism>
<accession>B0VBD8</accession>
<gene>
    <name evidence="1" type="primary">tsf</name>
    <name type="ordered locus">ABAYE1154</name>
</gene>
<protein>
    <recommendedName>
        <fullName evidence="1">Elongation factor Ts</fullName>
        <shortName evidence="1">EF-Ts</shortName>
    </recommendedName>
</protein>
<reference key="1">
    <citation type="journal article" date="2008" name="PLoS ONE">
        <title>Comparative analysis of Acinetobacters: three genomes for three lifestyles.</title>
        <authorList>
            <person name="Vallenet D."/>
            <person name="Nordmann P."/>
            <person name="Barbe V."/>
            <person name="Poirel L."/>
            <person name="Mangenot S."/>
            <person name="Bataille E."/>
            <person name="Dossat C."/>
            <person name="Gas S."/>
            <person name="Kreimeyer A."/>
            <person name="Lenoble P."/>
            <person name="Oztas S."/>
            <person name="Poulain J."/>
            <person name="Segurens B."/>
            <person name="Robert C."/>
            <person name="Abergel C."/>
            <person name="Claverie J.-M."/>
            <person name="Raoult D."/>
            <person name="Medigue C."/>
            <person name="Weissenbach J."/>
            <person name="Cruveiller S."/>
        </authorList>
    </citation>
    <scope>NUCLEOTIDE SEQUENCE [LARGE SCALE GENOMIC DNA]</scope>
    <source>
        <strain>AYE</strain>
    </source>
</reference>
<feature type="chain" id="PRO_1000116679" description="Elongation factor Ts">
    <location>
        <begin position="1"/>
        <end position="291"/>
    </location>
</feature>
<feature type="region of interest" description="Involved in Mg(2+) ion dislocation from EF-Tu" evidence="1">
    <location>
        <begin position="80"/>
        <end position="83"/>
    </location>
</feature>
<dbReference type="EMBL" id="CU459141">
    <property type="protein sequence ID" value="CAM86081.1"/>
    <property type="molecule type" value="Genomic_DNA"/>
</dbReference>
<dbReference type="RefSeq" id="WP_000125378.1">
    <property type="nucleotide sequence ID" value="NZ_JBDGFB010000005.1"/>
</dbReference>
<dbReference type="SMR" id="B0VBD8"/>
<dbReference type="EnsemblBacteria" id="CAM86081">
    <property type="protein sequence ID" value="CAM86081"/>
    <property type="gene ID" value="ABAYE1154"/>
</dbReference>
<dbReference type="GeneID" id="92894652"/>
<dbReference type="KEGG" id="aby:ABAYE1154"/>
<dbReference type="HOGENOM" id="CLU_047155_0_2_6"/>
<dbReference type="GO" id="GO:0005737">
    <property type="term" value="C:cytoplasm"/>
    <property type="evidence" value="ECO:0007669"/>
    <property type="project" value="UniProtKB-SubCell"/>
</dbReference>
<dbReference type="GO" id="GO:0003746">
    <property type="term" value="F:translation elongation factor activity"/>
    <property type="evidence" value="ECO:0007669"/>
    <property type="project" value="UniProtKB-UniRule"/>
</dbReference>
<dbReference type="CDD" id="cd14275">
    <property type="entry name" value="UBA_EF-Ts"/>
    <property type="match status" value="1"/>
</dbReference>
<dbReference type="FunFam" id="1.10.286.20:FF:000001">
    <property type="entry name" value="Elongation factor Ts"/>
    <property type="match status" value="1"/>
</dbReference>
<dbReference type="FunFam" id="1.10.8.10:FF:000001">
    <property type="entry name" value="Elongation factor Ts"/>
    <property type="match status" value="1"/>
</dbReference>
<dbReference type="FunFam" id="3.30.479.20:FF:000001">
    <property type="entry name" value="Elongation factor Ts"/>
    <property type="match status" value="1"/>
</dbReference>
<dbReference type="Gene3D" id="1.10.286.20">
    <property type="match status" value="1"/>
</dbReference>
<dbReference type="Gene3D" id="1.10.8.10">
    <property type="entry name" value="DNA helicase RuvA subunit, C-terminal domain"/>
    <property type="match status" value="1"/>
</dbReference>
<dbReference type="Gene3D" id="3.30.479.20">
    <property type="entry name" value="Elongation factor Ts, dimerisation domain"/>
    <property type="match status" value="2"/>
</dbReference>
<dbReference type="HAMAP" id="MF_00050">
    <property type="entry name" value="EF_Ts"/>
    <property type="match status" value="1"/>
</dbReference>
<dbReference type="InterPro" id="IPR036402">
    <property type="entry name" value="EF-Ts_dimer_sf"/>
</dbReference>
<dbReference type="InterPro" id="IPR001816">
    <property type="entry name" value="Transl_elong_EFTs/EF1B"/>
</dbReference>
<dbReference type="InterPro" id="IPR014039">
    <property type="entry name" value="Transl_elong_EFTs/EF1B_dimer"/>
</dbReference>
<dbReference type="InterPro" id="IPR018101">
    <property type="entry name" value="Transl_elong_Ts_CS"/>
</dbReference>
<dbReference type="InterPro" id="IPR009060">
    <property type="entry name" value="UBA-like_sf"/>
</dbReference>
<dbReference type="NCBIfam" id="TIGR00116">
    <property type="entry name" value="tsf"/>
    <property type="match status" value="1"/>
</dbReference>
<dbReference type="PANTHER" id="PTHR11741">
    <property type="entry name" value="ELONGATION FACTOR TS"/>
    <property type="match status" value="1"/>
</dbReference>
<dbReference type="PANTHER" id="PTHR11741:SF0">
    <property type="entry name" value="ELONGATION FACTOR TS, MITOCHONDRIAL"/>
    <property type="match status" value="1"/>
</dbReference>
<dbReference type="Pfam" id="PF00889">
    <property type="entry name" value="EF_TS"/>
    <property type="match status" value="1"/>
</dbReference>
<dbReference type="SUPFAM" id="SSF54713">
    <property type="entry name" value="Elongation factor Ts (EF-Ts), dimerisation domain"/>
    <property type="match status" value="1"/>
</dbReference>
<dbReference type="SUPFAM" id="SSF46934">
    <property type="entry name" value="UBA-like"/>
    <property type="match status" value="1"/>
</dbReference>
<dbReference type="PROSITE" id="PS01126">
    <property type="entry name" value="EF_TS_1"/>
    <property type="match status" value="1"/>
</dbReference>
<dbReference type="PROSITE" id="PS01127">
    <property type="entry name" value="EF_TS_2"/>
    <property type="match status" value="1"/>
</dbReference>